<sequence>MQKIMISDAAQAHFRRLLDQQEEGTHIRIFVVNPGTPNAECGVSYCPPNAVEATDTEMQYASFSAFVDEISLPFLDEAEIDYVTEELGAQLTLKAPNAKMRKVADDAPLLERVEYVIQTQINPQLAGHGGRITLIEITEDGYAILQFGGGCNGCSMVDVTLKDGIEKQLLSLFPGELQGAKDVTEHQRGEHSYY</sequence>
<gene>
    <name evidence="1" type="primary">nfuA</name>
    <name type="ordered locus">PM1557</name>
</gene>
<comment type="function">
    <text evidence="1">Involved in iron-sulfur cluster biogenesis. Binds a 4Fe-4S cluster, can transfer this cluster to apoproteins, and thereby intervenes in the maturation of Fe/S proteins. Could also act as a scaffold/chaperone for damaged Fe/S proteins.</text>
</comment>
<comment type="cofactor">
    <cofactor evidence="1">
        <name>[4Fe-4S] cluster</name>
        <dbReference type="ChEBI" id="CHEBI:49883"/>
    </cofactor>
    <text evidence="1">Binds 1 [4Fe-4S] cluster per subunit. The cluster is presumably bound at the interface of two monomers.</text>
</comment>
<comment type="subunit">
    <text evidence="1">Homodimer.</text>
</comment>
<comment type="similarity">
    <text evidence="1">Belongs to the NfuA family.</text>
</comment>
<dbReference type="EMBL" id="AE004439">
    <property type="protein sequence ID" value="AAK03641.1"/>
    <property type="molecule type" value="Genomic_DNA"/>
</dbReference>
<dbReference type="RefSeq" id="WP_005724395.1">
    <property type="nucleotide sequence ID" value="NC_002663.1"/>
</dbReference>
<dbReference type="SMR" id="Q9CKP9"/>
<dbReference type="STRING" id="272843.PM1557"/>
<dbReference type="EnsemblBacteria" id="AAK03641">
    <property type="protein sequence ID" value="AAK03641"/>
    <property type="gene ID" value="PM1557"/>
</dbReference>
<dbReference type="KEGG" id="pmu:PM1557"/>
<dbReference type="HOGENOM" id="CLU_094569_0_0_6"/>
<dbReference type="OrthoDB" id="9785450at2"/>
<dbReference type="Proteomes" id="UP000000809">
    <property type="component" value="Chromosome"/>
</dbReference>
<dbReference type="GO" id="GO:0051539">
    <property type="term" value="F:4 iron, 4 sulfur cluster binding"/>
    <property type="evidence" value="ECO:0007669"/>
    <property type="project" value="UniProtKB-UniRule"/>
</dbReference>
<dbReference type="GO" id="GO:0005506">
    <property type="term" value="F:iron ion binding"/>
    <property type="evidence" value="ECO:0007669"/>
    <property type="project" value="InterPro"/>
</dbReference>
<dbReference type="GO" id="GO:0016226">
    <property type="term" value="P:iron-sulfur cluster assembly"/>
    <property type="evidence" value="ECO:0007669"/>
    <property type="project" value="UniProtKB-UniRule"/>
</dbReference>
<dbReference type="GO" id="GO:0051604">
    <property type="term" value="P:protein maturation"/>
    <property type="evidence" value="ECO:0007669"/>
    <property type="project" value="UniProtKB-UniRule"/>
</dbReference>
<dbReference type="Gene3D" id="3.30.300.130">
    <property type="entry name" value="Fe-S cluster assembly (FSCA)"/>
    <property type="match status" value="1"/>
</dbReference>
<dbReference type="Gene3D" id="2.60.300.12">
    <property type="entry name" value="HesB-like domain"/>
    <property type="match status" value="1"/>
</dbReference>
<dbReference type="HAMAP" id="MF_01637">
    <property type="entry name" value="Fe_S_biogen_NfuA"/>
    <property type="match status" value="1"/>
</dbReference>
<dbReference type="InterPro" id="IPR017726">
    <property type="entry name" value="Fe/S_biogenesis_protein_NfuA"/>
</dbReference>
<dbReference type="InterPro" id="IPR000361">
    <property type="entry name" value="FeS_biogenesis"/>
</dbReference>
<dbReference type="InterPro" id="IPR034904">
    <property type="entry name" value="FSCA_dom_sf"/>
</dbReference>
<dbReference type="InterPro" id="IPR035903">
    <property type="entry name" value="HesB-like_dom_sf"/>
</dbReference>
<dbReference type="InterPro" id="IPR001075">
    <property type="entry name" value="NIF_FeS_clus_asmbl_NifU_C"/>
</dbReference>
<dbReference type="NCBIfam" id="NF008392">
    <property type="entry name" value="PRK11190.1"/>
    <property type="match status" value="1"/>
</dbReference>
<dbReference type="NCBIfam" id="TIGR03341">
    <property type="entry name" value="YhgI_GntY"/>
    <property type="match status" value="1"/>
</dbReference>
<dbReference type="PANTHER" id="PTHR11178:SF51">
    <property type="entry name" value="FE_S BIOGENESIS PROTEIN NFUA"/>
    <property type="match status" value="1"/>
</dbReference>
<dbReference type="PANTHER" id="PTHR11178">
    <property type="entry name" value="IRON-SULFUR CLUSTER SCAFFOLD PROTEIN NFU-RELATED"/>
    <property type="match status" value="1"/>
</dbReference>
<dbReference type="Pfam" id="PF01521">
    <property type="entry name" value="Fe-S_biosyn"/>
    <property type="match status" value="1"/>
</dbReference>
<dbReference type="Pfam" id="PF01106">
    <property type="entry name" value="NifU"/>
    <property type="match status" value="1"/>
</dbReference>
<dbReference type="SUPFAM" id="SSF117916">
    <property type="entry name" value="Fe-S cluster assembly (FSCA) domain-like"/>
    <property type="match status" value="1"/>
</dbReference>
<dbReference type="SUPFAM" id="SSF89360">
    <property type="entry name" value="HesB-like domain"/>
    <property type="match status" value="1"/>
</dbReference>
<protein>
    <recommendedName>
        <fullName evidence="1">Fe/S biogenesis protein NfuA</fullName>
    </recommendedName>
</protein>
<organism>
    <name type="scientific">Pasteurella multocida (strain Pm70)</name>
    <dbReference type="NCBI Taxonomy" id="272843"/>
    <lineage>
        <taxon>Bacteria</taxon>
        <taxon>Pseudomonadati</taxon>
        <taxon>Pseudomonadota</taxon>
        <taxon>Gammaproteobacteria</taxon>
        <taxon>Pasteurellales</taxon>
        <taxon>Pasteurellaceae</taxon>
        <taxon>Pasteurella</taxon>
    </lineage>
</organism>
<evidence type="ECO:0000255" key="1">
    <source>
        <dbReference type="HAMAP-Rule" id="MF_01637"/>
    </source>
</evidence>
<reference key="1">
    <citation type="journal article" date="2001" name="Proc. Natl. Acad. Sci. U.S.A.">
        <title>Complete genomic sequence of Pasteurella multocida Pm70.</title>
        <authorList>
            <person name="May B.J."/>
            <person name="Zhang Q."/>
            <person name="Li L.L."/>
            <person name="Paustian M.L."/>
            <person name="Whittam T.S."/>
            <person name="Kapur V."/>
        </authorList>
    </citation>
    <scope>NUCLEOTIDE SEQUENCE [LARGE SCALE GENOMIC DNA]</scope>
    <source>
        <strain>Pm70</strain>
    </source>
</reference>
<proteinExistence type="inferred from homology"/>
<name>NFUA_PASMU</name>
<feature type="chain" id="PRO_0000209478" description="Fe/S biogenesis protein NfuA">
    <location>
        <begin position="1"/>
        <end position="194"/>
    </location>
</feature>
<feature type="binding site" evidence="1">
    <location>
        <position position="151"/>
    </location>
    <ligand>
        <name>[4Fe-4S] cluster</name>
        <dbReference type="ChEBI" id="CHEBI:49883"/>
    </ligand>
</feature>
<feature type="binding site" evidence="1">
    <location>
        <position position="154"/>
    </location>
    <ligand>
        <name>[4Fe-4S] cluster</name>
        <dbReference type="ChEBI" id="CHEBI:49883"/>
    </ligand>
</feature>
<keyword id="KW-0004">4Fe-4S</keyword>
<keyword id="KW-0408">Iron</keyword>
<keyword id="KW-0411">Iron-sulfur</keyword>
<keyword id="KW-0479">Metal-binding</keyword>
<keyword id="KW-1185">Reference proteome</keyword>
<accession>Q9CKP9</accession>